<comment type="function">
    <text evidence="1">Protease subunit of a proteasome-like degradation complex believed to be a general protein degrading machinery.</text>
</comment>
<comment type="catalytic activity">
    <reaction evidence="1">
        <text>ATP-dependent cleavage of peptide bonds with broad specificity.</text>
        <dbReference type="EC" id="3.4.25.2"/>
    </reaction>
</comment>
<comment type="activity regulation">
    <text evidence="1">Allosterically activated by HslU binding.</text>
</comment>
<comment type="subunit">
    <text evidence="1">A double ring-shaped homohexamer of HslV is capped on each side by a ring-shaped HslU homohexamer. The assembly of the HslU/HslV complex is dependent on binding of ATP.</text>
</comment>
<comment type="subcellular location">
    <subcellularLocation>
        <location evidence="1">Cytoplasm</location>
    </subcellularLocation>
</comment>
<comment type="similarity">
    <text evidence="1">Belongs to the peptidase T1B family. HslV subfamily.</text>
</comment>
<evidence type="ECO:0000255" key="1">
    <source>
        <dbReference type="HAMAP-Rule" id="MF_00248"/>
    </source>
</evidence>
<protein>
    <recommendedName>
        <fullName evidence="1">ATP-dependent protease subunit HslV</fullName>
        <ecNumber evidence="1">3.4.25.2</ecNumber>
    </recommendedName>
</protein>
<gene>
    <name evidence="1" type="primary">hslV</name>
    <name type="ordered locus">bll0649</name>
</gene>
<reference key="1">
    <citation type="journal article" date="2002" name="DNA Res.">
        <title>Complete genomic sequence of nitrogen-fixing symbiotic bacterium Bradyrhizobium japonicum USDA110.</title>
        <authorList>
            <person name="Kaneko T."/>
            <person name="Nakamura Y."/>
            <person name="Sato S."/>
            <person name="Minamisawa K."/>
            <person name="Uchiumi T."/>
            <person name="Sasamoto S."/>
            <person name="Watanabe A."/>
            <person name="Idesawa K."/>
            <person name="Iriguchi M."/>
            <person name="Kawashima K."/>
            <person name="Kohara M."/>
            <person name="Matsumoto M."/>
            <person name="Shimpo S."/>
            <person name="Tsuruoka H."/>
            <person name="Wada T."/>
            <person name="Yamada M."/>
            <person name="Tabata S."/>
        </authorList>
    </citation>
    <scope>NUCLEOTIDE SEQUENCE [LARGE SCALE GENOMIC DNA]</scope>
    <source>
        <strain>JCM 10833 / BCRC 13528 / IAM 13628 / NBRC 14792 / USDA 110</strain>
    </source>
</reference>
<proteinExistence type="inferred from homology"/>
<keyword id="KW-0021">Allosteric enzyme</keyword>
<keyword id="KW-0963">Cytoplasm</keyword>
<keyword id="KW-0378">Hydrolase</keyword>
<keyword id="KW-0479">Metal-binding</keyword>
<keyword id="KW-0645">Protease</keyword>
<keyword id="KW-1185">Reference proteome</keyword>
<keyword id="KW-0915">Sodium</keyword>
<keyword id="KW-0888">Threonine protease</keyword>
<accession>Q89WM9</accession>
<dbReference type="EC" id="3.4.25.2" evidence="1"/>
<dbReference type="EMBL" id="BA000040">
    <property type="protein sequence ID" value="BAC45914.1"/>
    <property type="molecule type" value="Genomic_DNA"/>
</dbReference>
<dbReference type="RefSeq" id="NP_767289.1">
    <property type="nucleotide sequence ID" value="NC_004463.1"/>
</dbReference>
<dbReference type="RefSeq" id="WP_011083476.1">
    <property type="nucleotide sequence ID" value="NC_004463.1"/>
</dbReference>
<dbReference type="SMR" id="Q89WM9"/>
<dbReference type="FunCoup" id="Q89WM9">
    <property type="interactions" value="472"/>
</dbReference>
<dbReference type="STRING" id="224911.AAV28_00080"/>
<dbReference type="MEROPS" id="T01.006"/>
<dbReference type="EnsemblBacteria" id="BAC45914">
    <property type="protein sequence ID" value="BAC45914"/>
    <property type="gene ID" value="BAC45914"/>
</dbReference>
<dbReference type="GeneID" id="46487922"/>
<dbReference type="KEGG" id="bja:bll0649"/>
<dbReference type="PATRIC" id="fig|224911.44.peg.18"/>
<dbReference type="eggNOG" id="COG5405">
    <property type="taxonomic scope" value="Bacteria"/>
</dbReference>
<dbReference type="HOGENOM" id="CLU_093872_1_0_5"/>
<dbReference type="InParanoid" id="Q89WM9"/>
<dbReference type="OrthoDB" id="9804884at2"/>
<dbReference type="PhylomeDB" id="Q89WM9"/>
<dbReference type="Proteomes" id="UP000002526">
    <property type="component" value="Chromosome"/>
</dbReference>
<dbReference type="GO" id="GO:0005737">
    <property type="term" value="C:cytoplasm"/>
    <property type="evidence" value="ECO:0000318"/>
    <property type="project" value="GO_Central"/>
</dbReference>
<dbReference type="GO" id="GO:0009376">
    <property type="term" value="C:HslUV protease complex"/>
    <property type="evidence" value="ECO:0007669"/>
    <property type="project" value="UniProtKB-UniRule"/>
</dbReference>
<dbReference type="GO" id="GO:0005839">
    <property type="term" value="C:proteasome core complex"/>
    <property type="evidence" value="ECO:0007669"/>
    <property type="project" value="InterPro"/>
</dbReference>
<dbReference type="GO" id="GO:0046872">
    <property type="term" value="F:metal ion binding"/>
    <property type="evidence" value="ECO:0007669"/>
    <property type="project" value="UniProtKB-KW"/>
</dbReference>
<dbReference type="GO" id="GO:0004298">
    <property type="term" value="F:threonine-type endopeptidase activity"/>
    <property type="evidence" value="ECO:0007669"/>
    <property type="project" value="UniProtKB-KW"/>
</dbReference>
<dbReference type="GO" id="GO:0051603">
    <property type="term" value="P:proteolysis involved in protein catabolic process"/>
    <property type="evidence" value="ECO:0000318"/>
    <property type="project" value="GO_Central"/>
</dbReference>
<dbReference type="CDD" id="cd01913">
    <property type="entry name" value="protease_HslV"/>
    <property type="match status" value="1"/>
</dbReference>
<dbReference type="FunFam" id="3.60.20.10:FF:000002">
    <property type="entry name" value="ATP-dependent protease subunit HslV"/>
    <property type="match status" value="1"/>
</dbReference>
<dbReference type="Gene3D" id="3.60.20.10">
    <property type="entry name" value="Glutamine Phosphoribosylpyrophosphate, subunit 1, domain 1"/>
    <property type="match status" value="1"/>
</dbReference>
<dbReference type="HAMAP" id="MF_00248">
    <property type="entry name" value="HslV"/>
    <property type="match status" value="1"/>
</dbReference>
<dbReference type="InterPro" id="IPR022281">
    <property type="entry name" value="ATP-dep_Prtase_HsIV_su"/>
</dbReference>
<dbReference type="InterPro" id="IPR029055">
    <property type="entry name" value="Ntn_hydrolases_N"/>
</dbReference>
<dbReference type="InterPro" id="IPR001353">
    <property type="entry name" value="Proteasome_sua/b"/>
</dbReference>
<dbReference type="InterPro" id="IPR023333">
    <property type="entry name" value="Proteasome_suB-type"/>
</dbReference>
<dbReference type="NCBIfam" id="TIGR03692">
    <property type="entry name" value="ATP_dep_HslV"/>
    <property type="match status" value="1"/>
</dbReference>
<dbReference type="NCBIfam" id="NF003964">
    <property type="entry name" value="PRK05456.1"/>
    <property type="match status" value="1"/>
</dbReference>
<dbReference type="PANTHER" id="PTHR32194:SF7">
    <property type="entry name" value="ATP-DEPENDENT PROTEASE SUBUNIT HSLV"/>
    <property type="match status" value="1"/>
</dbReference>
<dbReference type="PANTHER" id="PTHR32194">
    <property type="entry name" value="METALLOPROTEASE TLDD"/>
    <property type="match status" value="1"/>
</dbReference>
<dbReference type="Pfam" id="PF00227">
    <property type="entry name" value="Proteasome"/>
    <property type="match status" value="1"/>
</dbReference>
<dbReference type="PIRSF" id="PIRSF039093">
    <property type="entry name" value="HslV"/>
    <property type="match status" value="1"/>
</dbReference>
<dbReference type="SUPFAM" id="SSF56235">
    <property type="entry name" value="N-terminal nucleophile aminohydrolases (Ntn hydrolases)"/>
    <property type="match status" value="1"/>
</dbReference>
<dbReference type="PROSITE" id="PS51476">
    <property type="entry name" value="PROTEASOME_BETA_2"/>
    <property type="match status" value="1"/>
</dbReference>
<sequence length="186" mass="19797">MQDSQKSSPGWHGTTILTVRKGGKVVIGGDGQVSIGQTVIKSNAKKVRKLGRGDVIGGFAGATADAFTLFERLEAKLEQYPGQLTRAAVELAKDWRTDRYLRRLEAMMIVADKDVSLVLTGTGDVLEPEAGVMAIGSGGNYALAAARALLDTDKDAETIVRRSLDIAADICVYTNRNVTIESLATG</sequence>
<feature type="chain" id="PRO_0000148091" description="ATP-dependent protease subunit HslV">
    <location>
        <begin position="1"/>
        <end position="186"/>
    </location>
</feature>
<feature type="active site" evidence="1">
    <location>
        <position position="14"/>
    </location>
</feature>
<feature type="binding site" evidence="1">
    <location>
        <position position="168"/>
    </location>
    <ligand>
        <name>Na(+)</name>
        <dbReference type="ChEBI" id="CHEBI:29101"/>
    </ligand>
</feature>
<feature type="binding site" evidence="1">
    <location>
        <position position="171"/>
    </location>
    <ligand>
        <name>Na(+)</name>
        <dbReference type="ChEBI" id="CHEBI:29101"/>
    </ligand>
</feature>
<feature type="binding site" evidence="1">
    <location>
        <position position="174"/>
    </location>
    <ligand>
        <name>Na(+)</name>
        <dbReference type="ChEBI" id="CHEBI:29101"/>
    </ligand>
</feature>
<organism>
    <name type="scientific">Bradyrhizobium diazoefficiens (strain JCM 10833 / BCRC 13528 / IAM 13628 / NBRC 14792 / USDA 110)</name>
    <dbReference type="NCBI Taxonomy" id="224911"/>
    <lineage>
        <taxon>Bacteria</taxon>
        <taxon>Pseudomonadati</taxon>
        <taxon>Pseudomonadota</taxon>
        <taxon>Alphaproteobacteria</taxon>
        <taxon>Hyphomicrobiales</taxon>
        <taxon>Nitrobacteraceae</taxon>
        <taxon>Bradyrhizobium</taxon>
    </lineage>
</organism>
<name>HSLV_BRADU</name>